<accession>B1J2S8</accession>
<gene>
    <name evidence="1" type="primary">ubiE</name>
    <name type="ordered locus">PputW619_0454</name>
</gene>
<dbReference type="EC" id="2.1.1.163" evidence="1"/>
<dbReference type="EC" id="2.1.1.201" evidence="1"/>
<dbReference type="EMBL" id="CP000949">
    <property type="protein sequence ID" value="ACA70959.1"/>
    <property type="molecule type" value="Genomic_DNA"/>
</dbReference>
<dbReference type="SMR" id="B1J2S8"/>
<dbReference type="STRING" id="390235.PputW619_0454"/>
<dbReference type="KEGG" id="ppw:PputW619_0454"/>
<dbReference type="eggNOG" id="COG2226">
    <property type="taxonomic scope" value="Bacteria"/>
</dbReference>
<dbReference type="HOGENOM" id="CLU_037990_0_0_6"/>
<dbReference type="OrthoDB" id="9808140at2"/>
<dbReference type="UniPathway" id="UPA00079">
    <property type="reaction ID" value="UER00169"/>
</dbReference>
<dbReference type="UniPathway" id="UPA00232"/>
<dbReference type="GO" id="GO:0008425">
    <property type="term" value="F:2-methoxy-6-polyprenyl-1,4-benzoquinol methyltransferase activity"/>
    <property type="evidence" value="ECO:0007669"/>
    <property type="project" value="UniProtKB-UniRule"/>
</dbReference>
<dbReference type="GO" id="GO:0043770">
    <property type="term" value="F:demethylmenaquinone methyltransferase activity"/>
    <property type="evidence" value="ECO:0007669"/>
    <property type="project" value="UniProtKB-UniRule"/>
</dbReference>
<dbReference type="GO" id="GO:0009060">
    <property type="term" value="P:aerobic respiration"/>
    <property type="evidence" value="ECO:0007669"/>
    <property type="project" value="UniProtKB-UniRule"/>
</dbReference>
<dbReference type="GO" id="GO:0009234">
    <property type="term" value="P:menaquinone biosynthetic process"/>
    <property type="evidence" value="ECO:0007669"/>
    <property type="project" value="UniProtKB-UniRule"/>
</dbReference>
<dbReference type="GO" id="GO:0032259">
    <property type="term" value="P:methylation"/>
    <property type="evidence" value="ECO:0007669"/>
    <property type="project" value="UniProtKB-KW"/>
</dbReference>
<dbReference type="CDD" id="cd02440">
    <property type="entry name" value="AdoMet_MTases"/>
    <property type="match status" value="1"/>
</dbReference>
<dbReference type="FunFam" id="3.40.50.150:FF:000014">
    <property type="entry name" value="Ubiquinone/menaquinone biosynthesis C-methyltransferase UbiE"/>
    <property type="match status" value="1"/>
</dbReference>
<dbReference type="Gene3D" id="3.40.50.150">
    <property type="entry name" value="Vaccinia Virus protein VP39"/>
    <property type="match status" value="1"/>
</dbReference>
<dbReference type="HAMAP" id="MF_01813">
    <property type="entry name" value="MenG_UbiE_methyltr"/>
    <property type="match status" value="1"/>
</dbReference>
<dbReference type="InterPro" id="IPR029063">
    <property type="entry name" value="SAM-dependent_MTases_sf"/>
</dbReference>
<dbReference type="InterPro" id="IPR004033">
    <property type="entry name" value="UbiE/COQ5_MeTrFase"/>
</dbReference>
<dbReference type="InterPro" id="IPR023576">
    <property type="entry name" value="UbiE/COQ5_MeTrFase_CS"/>
</dbReference>
<dbReference type="NCBIfam" id="TIGR01934">
    <property type="entry name" value="MenG_MenH_UbiE"/>
    <property type="match status" value="1"/>
</dbReference>
<dbReference type="NCBIfam" id="NF001240">
    <property type="entry name" value="PRK00216.1-1"/>
    <property type="match status" value="1"/>
</dbReference>
<dbReference type="NCBIfam" id="NF001244">
    <property type="entry name" value="PRK00216.1-5"/>
    <property type="match status" value="1"/>
</dbReference>
<dbReference type="PANTHER" id="PTHR43591:SF24">
    <property type="entry name" value="2-METHOXY-6-POLYPRENYL-1,4-BENZOQUINOL METHYLASE, MITOCHONDRIAL"/>
    <property type="match status" value="1"/>
</dbReference>
<dbReference type="PANTHER" id="PTHR43591">
    <property type="entry name" value="METHYLTRANSFERASE"/>
    <property type="match status" value="1"/>
</dbReference>
<dbReference type="Pfam" id="PF01209">
    <property type="entry name" value="Ubie_methyltran"/>
    <property type="match status" value="1"/>
</dbReference>
<dbReference type="SUPFAM" id="SSF53335">
    <property type="entry name" value="S-adenosyl-L-methionine-dependent methyltransferases"/>
    <property type="match status" value="1"/>
</dbReference>
<dbReference type="PROSITE" id="PS51608">
    <property type="entry name" value="SAM_MT_UBIE"/>
    <property type="match status" value="1"/>
</dbReference>
<dbReference type="PROSITE" id="PS01183">
    <property type="entry name" value="UBIE_1"/>
    <property type="match status" value="1"/>
</dbReference>
<dbReference type="PROSITE" id="PS01184">
    <property type="entry name" value="UBIE_2"/>
    <property type="match status" value="1"/>
</dbReference>
<proteinExistence type="inferred from homology"/>
<sequence>MNDQRKGEHAEPTTHFGYQDVPESQKAKKVAEVFHSVAAKYDLMNDVLSGGMHRLWKRFTIELSGVRSGNRVLDIAGGTGDLAAKFSRLVGPTGQVVLADINDSMLKVGRDRLLDRGVAGNIEFVQADAEKLPFPDNHFDCVTIAFGLRNVTHKDEAIRSMLRVLKPGGRLLILEFSKPTNKLMSKAYDAYSFAFMPLAGKLITNDSESYRYLAESIRMHPDQETLKAMMVDAGFDRVTYHNMTSGIVAVHRGIKP</sequence>
<name>UBIE_PSEPW</name>
<evidence type="ECO:0000255" key="1">
    <source>
        <dbReference type="HAMAP-Rule" id="MF_01813"/>
    </source>
</evidence>
<evidence type="ECO:0000256" key="2">
    <source>
        <dbReference type="SAM" id="MobiDB-lite"/>
    </source>
</evidence>
<keyword id="KW-0474">Menaquinone biosynthesis</keyword>
<keyword id="KW-0489">Methyltransferase</keyword>
<keyword id="KW-0949">S-adenosyl-L-methionine</keyword>
<keyword id="KW-0808">Transferase</keyword>
<keyword id="KW-0831">Ubiquinone biosynthesis</keyword>
<feature type="chain" id="PRO_1000187789" description="Ubiquinone/menaquinone biosynthesis C-methyltransferase UbiE">
    <location>
        <begin position="1"/>
        <end position="256"/>
    </location>
</feature>
<feature type="region of interest" description="Disordered" evidence="2">
    <location>
        <begin position="1"/>
        <end position="21"/>
    </location>
</feature>
<feature type="compositionally biased region" description="Basic and acidic residues" evidence="2">
    <location>
        <begin position="1"/>
        <end position="12"/>
    </location>
</feature>
<feature type="binding site" evidence="1">
    <location>
        <position position="79"/>
    </location>
    <ligand>
        <name>S-adenosyl-L-methionine</name>
        <dbReference type="ChEBI" id="CHEBI:59789"/>
    </ligand>
</feature>
<feature type="binding site" evidence="1">
    <location>
        <position position="100"/>
    </location>
    <ligand>
        <name>S-adenosyl-L-methionine</name>
        <dbReference type="ChEBI" id="CHEBI:59789"/>
    </ligand>
</feature>
<feature type="binding site" evidence="1">
    <location>
        <begin position="128"/>
        <end position="129"/>
    </location>
    <ligand>
        <name>S-adenosyl-L-methionine</name>
        <dbReference type="ChEBI" id="CHEBI:59789"/>
    </ligand>
</feature>
<protein>
    <recommendedName>
        <fullName evidence="1">Ubiquinone/menaquinone biosynthesis C-methyltransferase UbiE</fullName>
        <ecNumber evidence="1">2.1.1.163</ecNumber>
        <ecNumber evidence="1">2.1.1.201</ecNumber>
    </recommendedName>
    <alternativeName>
        <fullName evidence="1">2-methoxy-6-polyprenyl-1,4-benzoquinol methylase</fullName>
    </alternativeName>
    <alternativeName>
        <fullName evidence="1">Demethylmenaquinone methyltransferase</fullName>
    </alternativeName>
</protein>
<reference key="1">
    <citation type="submission" date="2008-02" db="EMBL/GenBank/DDBJ databases">
        <title>Complete sequence of Pseudomonas putida W619.</title>
        <authorList>
            <person name="Copeland A."/>
            <person name="Lucas S."/>
            <person name="Lapidus A."/>
            <person name="Barry K."/>
            <person name="Detter J.C."/>
            <person name="Glavina del Rio T."/>
            <person name="Dalin E."/>
            <person name="Tice H."/>
            <person name="Pitluck S."/>
            <person name="Chain P."/>
            <person name="Malfatti S."/>
            <person name="Shin M."/>
            <person name="Vergez L."/>
            <person name="Schmutz J."/>
            <person name="Larimer F."/>
            <person name="Land M."/>
            <person name="Hauser L."/>
            <person name="Kyrpides N."/>
            <person name="Kim E."/>
            <person name="Taghavi S."/>
            <person name="Vangronsveld D."/>
            <person name="van der Lelie D."/>
            <person name="Richardson P."/>
        </authorList>
    </citation>
    <scope>NUCLEOTIDE SEQUENCE [LARGE SCALE GENOMIC DNA]</scope>
    <source>
        <strain>W619</strain>
    </source>
</reference>
<comment type="function">
    <text evidence="1">Methyltransferase required for the conversion of demethylmenaquinol (DMKH2) to menaquinol (MKH2) and the conversion of 2-polyprenyl-6-methoxy-1,4-benzoquinol (DDMQH2) to 2-polyprenyl-3-methyl-6-methoxy-1,4-benzoquinol (DMQH2).</text>
</comment>
<comment type="catalytic activity">
    <reaction evidence="1">
        <text>a 2-demethylmenaquinol + S-adenosyl-L-methionine = a menaquinol + S-adenosyl-L-homocysteine + H(+)</text>
        <dbReference type="Rhea" id="RHEA:42640"/>
        <dbReference type="Rhea" id="RHEA-COMP:9539"/>
        <dbReference type="Rhea" id="RHEA-COMP:9563"/>
        <dbReference type="ChEBI" id="CHEBI:15378"/>
        <dbReference type="ChEBI" id="CHEBI:18151"/>
        <dbReference type="ChEBI" id="CHEBI:55437"/>
        <dbReference type="ChEBI" id="CHEBI:57856"/>
        <dbReference type="ChEBI" id="CHEBI:59789"/>
        <dbReference type="EC" id="2.1.1.163"/>
    </reaction>
</comment>
<comment type="catalytic activity">
    <reaction evidence="1">
        <text>a 2-methoxy-6-(all-trans-polyprenyl)benzene-1,4-diol + S-adenosyl-L-methionine = a 5-methoxy-2-methyl-3-(all-trans-polyprenyl)benzene-1,4-diol + S-adenosyl-L-homocysteine + H(+)</text>
        <dbReference type="Rhea" id="RHEA:28286"/>
        <dbReference type="Rhea" id="RHEA-COMP:10858"/>
        <dbReference type="Rhea" id="RHEA-COMP:10859"/>
        <dbReference type="ChEBI" id="CHEBI:15378"/>
        <dbReference type="ChEBI" id="CHEBI:57856"/>
        <dbReference type="ChEBI" id="CHEBI:59789"/>
        <dbReference type="ChEBI" id="CHEBI:84166"/>
        <dbReference type="ChEBI" id="CHEBI:84167"/>
        <dbReference type="EC" id="2.1.1.201"/>
    </reaction>
</comment>
<comment type="pathway">
    <text evidence="1">Quinol/quinone metabolism; menaquinone biosynthesis; menaquinol from 1,4-dihydroxy-2-naphthoate: step 2/2.</text>
</comment>
<comment type="pathway">
    <text evidence="1">Cofactor biosynthesis; ubiquinone biosynthesis.</text>
</comment>
<comment type="similarity">
    <text evidence="1">Belongs to the class I-like SAM-binding methyltransferase superfamily. MenG/UbiE family.</text>
</comment>
<organism>
    <name type="scientific">Pseudomonas putida (strain W619)</name>
    <dbReference type="NCBI Taxonomy" id="390235"/>
    <lineage>
        <taxon>Bacteria</taxon>
        <taxon>Pseudomonadati</taxon>
        <taxon>Pseudomonadota</taxon>
        <taxon>Gammaproteobacteria</taxon>
        <taxon>Pseudomonadales</taxon>
        <taxon>Pseudomonadaceae</taxon>
        <taxon>Pseudomonas</taxon>
    </lineage>
</organism>